<proteinExistence type="inferred from homology"/>
<organism>
    <name type="scientific">Thermus thermophilus (strain ATCC BAA-163 / DSM 7039 / HB27)</name>
    <dbReference type="NCBI Taxonomy" id="262724"/>
    <lineage>
        <taxon>Bacteria</taxon>
        <taxon>Thermotogati</taxon>
        <taxon>Deinococcota</taxon>
        <taxon>Deinococci</taxon>
        <taxon>Thermales</taxon>
        <taxon>Thermaceae</taxon>
        <taxon>Thermus</taxon>
    </lineage>
</organism>
<name>RUVC_THET2</name>
<feature type="chain" id="PRO_0000225183" description="Crossover junction endodeoxyribonuclease RuvC">
    <location>
        <begin position="1"/>
        <end position="166"/>
    </location>
</feature>
<feature type="active site" evidence="1">
    <location>
        <position position="7"/>
    </location>
</feature>
<feature type="active site" evidence="1">
    <location>
        <position position="70"/>
    </location>
</feature>
<feature type="active site" evidence="1">
    <location>
        <position position="143"/>
    </location>
</feature>
<feature type="binding site" evidence="1">
    <location>
        <position position="7"/>
    </location>
    <ligand>
        <name>Mg(2+)</name>
        <dbReference type="ChEBI" id="CHEBI:18420"/>
        <label>1</label>
    </ligand>
</feature>
<feature type="binding site" evidence="1">
    <location>
        <position position="70"/>
    </location>
    <ligand>
        <name>Mg(2+)</name>
        <dbReference type="ChEBI" id="CHEBI:18420"/>
        <label>2</label>
    </ligand>
</feature>
<feature type="binding site" evidence="1">
    <location>
        <position position="143"/>
    </location>
    <ligand>
        <name>Mg(2+)</name>
        <dbReference type="ChEBI" id="CHEBI:18420"/>
        <label>1</label>
    </ligand>
</feature>
<accession>Q72JP3</accession>
<gene>
    <name evidence="1" type="primary">ruvC</name>
    <name type="ordered locus">TT_C0725</name>
</gene>
<evidence type="ECO:0000255" key="1">
    <source>
        <dbReference type="HAMAP-Rule" id="MF_00034"/>
    </source>
</evidence>
<dbReference type="EC" id="3.1.21.10" evidence="1"/>
<dbReference type="EMBL" id="AE017221">
    <property type="protein sequence ID" value="AAS81073.1"/>
    <property type="molecule type" value="Genomic_DNA"/>
</dbReference>
<dbReference type="RefSeq" id="WP_011173164.1">
    <property type="nucleotide sequence ID" value="NC_005835.1"/>
</dbReference>
<dbReference type="SMR" id="Q72JP3"/>
<dbReference type="GeneID" id="3168165"/>
<dbReference type="KEGG" id="tth:TT_C0725"/>
<dbReference type="eggNOG" id="COG0817">
    <property type="taxonomic scope" value="Bacteria"/>
</dbReference>
<dbReference type="HOGENOM" id="CLU_091257_3_1_0"/>
<dbReference type="OrthoDB" id="9805499at2"/>
<dbReference type="Proteomes" id="UP000000592">
    <property type="component" value="Chromosome"/>
</dbReference>
<dbReference type="GO" id="GO:0005737">
    <property type="term" value="C:cytoplasm"/>
    <property type="evidence" value="ECO:0007669"/>
    <property type="project" value="UniProtKB-SubCell"/>
</dbReference>
<dbReference type="GO" id="GO:0048476">
    <property type="term" value="C:Holliday junction resolvase complex"/>
    <property type="evidence" value="ECO:0007669"/>
    <property type="project" value="UniProtKB-UniRule"/>
</dbReference>
<dbReference type="GO" id="GO:0008821">
    <property type="term" value="F:crossover junction DNA endonuclease activity"/>
    <property type="evidence" value="ECO:0007669"/>
    <property type="project" value="UniProtKB-UniRule"/>
</dbReference>
<dbReference type="GO" id="GO:0003677">
    <property type="term" value="F:DNA binding"/>
    <property type="evidence" value="ECO:0007669"/>
    <property type="project" value="UniProtKB-KW"/>
</dbReference>
<dbReference type="GO" id="GO:0000287">
    <property type="term" value="F:magnesium ion binding"/>
    <property type="evidence" value="ECO:0007669"/>
    <property type="project" value="UniProtKB-UniRule"/>
</dbReference>
<dbReference type="GO" id="GO:0006310">
    <property type="term" value="P:DNA recombination"/>
    <property type="evidence" value="ECO:0007669"/>
    <property type="project" value="UniProtKB-UniRule"/>
</dbReference>
<dbReference type="GO" id="GO:0006281">
    <property type="term" value="P:DNA repair"/>
    <property type="evidence" value="ECO:0007669"/>
    <property type="project" value="UniProtKB-UniRule"/>
</dbReference>
<dbReference type="CDD" id="cd16962">
    <property type="entry name" value="RuvC"/>
    <property type="match status" value="1"/>
</dbReference>
<dbReference type="FunFam" id="3.30.420.10:FF:000002">
    <property type="entry name" value="Crossover junction endodeoxyribonuclease RuvC"/>
    <property type="match status" value="1"/>
</dbReference>
<dbReference type="Gene3D" id="3.30.420.10">
    <property type="entry name" value="Ribonuclease H-like superfamily/Ribonuclease H"/>
    <property type="match status" value="1"/>
</dbReference>
<dbReference type="HAMAP" id="MF_00034">
    <property type="entry name" value="RuvC"/>
    <property type="match status" value="1"/>
</dbReference>
<dbReference type="InterPro" id="IPR012337">
    <property type="entry name" value="RNaseH-like_sf"/>
</dbReference>
<dbReference type="InterPro" id="IPR036397">
    <property type="entry name" value="RNaseH_sf"/>
</dbReference>
<dbReference type="InterPro" id="IPR002176">
    <property type="entry name" value="X-over_junc_endoDNase_RuvC"/>
</dbReference>
<dbReference type="NCBIfam" id="TIGR00228">
    <property type="entry name" value="ruvC"/>
    <property type="match status" value="1"/>
</dbReference>
<dbReference type="PANTHER" id="PTHR30194">
    <property type="entry name" value="CROSSOVER JUNCTION ENDODEOXYRIBONUCLEASE RUVC"/>
    <property type="match status" value="1"/>
</dbReference>
<dbReference type="PANTHER" id="PTHR30194:SF3">
    <property type="entry name" value="CROSSOVER JUNCTION ENDODEOXYRIBONUCLEASE RUVC"/>
    <property type="match status" value="1"/>
</dbReference>
<dbReference type="Pfam" id="PF02075">
    <property type="entry name" value="RuvC"/>
    <property type="match status" value="1"/>
</dbReference>
<dbReference type="PRINTS" id="PR00696">
    <property type="entry name" value="RSOLVASERUVC"/>
</dbReference>
<dbReference type="SUPFAM" id="SSF53098">
    <property type="entry name" value="Ribonuclease H-like"/>
    <property type="match status" value="1"/>
</dbReference>
<comment type="function">
    <text evidence="1">The RuvA-RuvB-RuvC complex processes Holliday junction (HJ) DNA during genetic recombination and DNA repair. Endonuclease that resolves HJ intermediates. Cleaves cruciform DNA by making single-stranded nicks across the HJ at symmetrical positions within the homologous arms, yielding a 5'-phosphate and a 3'-hydroxyl group; requires a central core of homology in the junction. The consensus cleavage sequence is 5'-(A/T)TT(C/G)-3'. Cleavage occurs on the 3'-side of the TT dinucleotide at the point of strand exchange. HJ branch migration catalyzed by RuvA-RuvB allows RuvC to scan DNA until it finds its consensus sequence, where it cleaves and resolves the cruciform DNA.</text>
</comment>
<comment type="catalytic activity">
    <reaction evidence="1">
        <text>Endonucleolytic cleavage at a junction such as a reciprocal single-stranded crossover between two homologous DNA duplexes (Holliday junction).</text>
        <dbReference type="EC" id="3.1.21.10"/>
    </reaction>
</comment>
<comment type="cofactor">
    <cofactor evidence="1">
        <name>Mg(2+)</name>
        <dbReference type="ChEBI" id="CHEBI:18420"/>
    </cofactor>
    <text evidence="1">Binds 2 Mg(2+) ion per subunit.</text>
</comment>
<comment type="subunit">
    <text evidence="1">Homodimer which binds Holliday junction (HJ) DNA. The HJ becomes 2-fold symmetrical on binding to RuvC with unstacked arms; it has a different conformation from HJ DNA in complex with RuvA. In the full resolvosome a probable DNA-RuvA(4)-RuvB(12)-RuvC(2) complex forms which resolves the HJ.</text>
</comment>
<comment type="subcellular location">
    <subcellularLocation>
        <location evidence="1">Cytoplasm</location>
    </subcellularLocation>
</comment>
<comment type="similarity">
    <text evidence="1">Belongs to the RuvC family.</text>
</comment>
<reference key="1">
    <citation type="journal article" date="2004" name="Nat. Biotechnol.">
        <title>The genome sequence of the extreme thermophile Thermus thermophilus.</title>
        <authorList>
            <person name="Henne A."/>
            <person name="Brueggemann H."/>
            <person name="Raasch C."/>
            <person name="Wiezer A."/>
            <person name="Hartsch T."/>
            <person name="Liesegang H."/>
            <person name="Johann A."/>
            <person name="Lienard T."/>
            <person name="Gohl O."/>
            <person name="Martinez-Arias R."/>
            <person name="Jacobi C."/>
            <person name="Starkuviene V."/>
            <person name="Schlenczeck S."/>
            <person name="Dencker S."/>
            <person name="Huber R."/>
            <person name="Klenk H.-P."/>
            <person name="Kramer W."/>
            <person name="Merkl R."/>
            <person name="Gottschalk G."/>
            <person name="Fritz H.-J."/>
        </authorList>
    </citation>
    <scope>NUCLEOTIDE SEQUENCE [LARGE SCALE GENOMIC DNA]</scope>
    <source>
        <strain>ATCC BAA-163 / DSM 7039 / HB27</strain>
    </source>
</reference>
<sequence>MVVAGIDPGITHLGLGVVAVEGKGALKARLLHGEVVKTSPQEPAKERVGRIHARVLEVLHRFRPEAVAVEEQFFYRQNELAYKVGWALGAVLVAAFEAGVPVYAYGPMQVKQALAGHGHAAKEEVALMVRGILGLKEAPRPSHLADALAIALTHAFYARMGTAKPL</sequence>
<keyword id="KW-0963">Cytoplasm</keyword>
<keyword id="KW-0227">DNA damage</keyword>
<keyword id="KW-0233">DNA recombination</keyword>
<keyword id="KW-0234">DNA repair</keyword>
<keyword id="KW-0238">DNA-binding</keyword>
<keyword id="KW-0255">Endonuclease</keyword>
<keyword id="KW-0378">Hydrolase</keyword>
<keyword id="KW-0460">Magnesium</keyword>
<keyword id="KW-0479">Metal-binding</keyword>
<keyword id="KW-0540">Nuclease</keyword>
<protein>
    <recommendedName>
        <fullName evidence="1">Crossover junction endodeoxyribonuclease RuvC</fullName>
        <ecNumber evidence="1">3.1.21.10</ecNumber>
    </recommendedName>
    <alternativeName>
        <fullName evidence="1">Holliday junction nuclease RuvC</fullName>
    </alternativeName>
    <alternativeName>
        <fullName evidence="1">Holliday junction resolvase RuvC</fullName>
    </alternativeName>
</protein>